<feature type="chain" id="PRO_1000080336" description="Large ribosomal subunit protein bL19">
    <location>
        <begin position="1"/>
        <end position="114"/>
    </location>
</feature>
<comment type="function">
    <text evidence="1">This protein is located at the 30S-50S ribosomal subunit interface and may play a role in the structure and function of the aminoacyl-tRNA binding site.</text>
</comment>
<comment type="similarity">
    <text evidence="1">Belongs to the bacterial ribosomal protein bL19 family.</text>
</comment>
<dbReference type="EMBL" id="CP000764">
    <property type="protein sequence ID" value="ABS22728.1"/>
    <property type="molecule type" value="Genomic_DNA"/>
</dbReference>
<dbReference type="RefSeq" id="WP_012094935.1">
    <property type="nucleotide sequence ID" value="NC_009674.1"/>
</dbReference>
<dbReference type="SMR" id="A7GRH0"/>
<dbReference type="STRING" id="315749.Bcer98_2492"/>
<dbReference type="GeneID" id="33897747"/>
<dbReference type="KEGG" id="bcy:Bcer98_2492"/>
<dbReference type="eggNOG" id="COG0335">
    <property type="taxonomic scope" value="Bacteria"/>
</dbReference>
<dbReference type="HOGENOM" id="CLU_103507_2_1_9"/>
<dbReference type="OrthoDB" id="9803541at2"/>
<dbReference type="Proteomes" id="UP000002300">
    <property type="component" value="Chromosome"/>
</dbReference>
<dbReference type="GO" id="GO:0022625">
    <property type="term" value="C:cytosolic large ribosomal subunit"/>
    <property type="evidence" value="ECO:0007669"/>
    <property type="project" value="TreeGrafter"/>
</dbReference>
<dbReference type="GO" id="GO:0003735">
    <property type="term" value="F:structural constituent of ribosome"/>
    <property type="evidence" value="ECO:0007669"/>
    <property type="project" value="InterPro"/>
</dbReference>
<dbReference type="GO" id="GO:0006412">
    <property type="term" value="P:translation"/>
    <property type="evidence" value="ECO:0007669"/>
    <property type="project" value="UniProtKB-UniRule"/>
</dbReference>
<dbReference type="FunFam" id="2.30.30.790:FF:000001">
    <property type="entry name" value="50S ribosomal protein L19"/>
    <property type="match status" value="1"/>
</dbReference>
<dbReference type="Gene3D" id="2.30.30.790">
    <property type="match status" value="1"/>
</dbReference>
<dbReference type="HAMAP" id="MF_00402">
    <property type="entry name" value="Ribosomal_bL19"/>
    <property type="match status" value="1"/>
</dbReference>
<dbReference type="InterPro" id="IPR001857">
    <property type="entry name" value="Ribosomal_bL19"/>
</dbReference>
<dbReference type="InterPro" id="IPR018257">
    <property type="entry name" value="Ribosomal_bL19_CS"/>
</dbReference>
<dbReference type="InterPro" id="IPR038657">
    <property type="entry name" value="Ribosomal_bL19_sf"/>
</dbReference>
<dbReference type="InterPro" id="IPR008991">
    <property type="entry name" value="Translation_prot_SH3-like_sf"/>
</dbReference>
<dbReference type="NCBIfam" id="TIGR01024">
    <property type="entry name" value="rplS_bact"/>
    <property type="match status" value="1"/>
</dbReference>
<dbReference type="PANTHER" id="PTHR15680:SF9">
    <property type="entry name" value="LARGE RIBOSOMAL SUBUNIT PROTEIN BL19M"/>
    <property type="match status" value="1"/>
</dbReference>
<dbReference type="PANTHER" id="PTHR15680">
    <property type="entry name" value="RIBOSOMAL PROTEIN L19"/>
    <property type="match status" value="1"/>
</dbReference>
<dbReference type="Pfam" id="PF01245">
    <property type="entry name" value="Ribosomal_L19"/>
    <property type="match status" value="1"/>
</dbReference>
<dbReference type="PIRSF" id="PIRSF002191">
    <property type="entry name" value="Ribosomal_L19"/>
    <property type="match status" value="1"/>
</dbReference>
<dbReference type="PRINTS" id="PR00061">
    <property type="entry name" value="RIBOSOMALL19"/>
</dbReference>
<dbReference type="SUPFAM" id="SSF50104">
    <property type="entry name" value="Translation proteins SH3-like domain"/>
    <property type="match status" value="1"/>
</dbReference>
<dbReference type="PROSITE" id="PS01015">
    <property type="entry name" value="RIBOSOMAL_L19"/>
    <property type="match status" value="1"/>
</dbReference>
<proteinExistence type="inferred from homology"/>
<accession>A7GRH0</accession>
<organism>
    <name type="scientific">Bacillus cytotoxicus (strain DSM 22905 / CIP 110041 / 391-98 / NVH 391-98)</name>
    <dbReference type="NCBI Taxonomy" id="315749"/>
    <lineage>
        <taxon>Bacteria</taxon>
        <taxon>Bacillati</taxon>
        <taxon>Bacillota</taxon>
        <taxon>Bacilli</taxon>
        <taxon>Bacillales</taxon>
        <taxon>Bacillaceae</taxon>
        <taxon>Bacillus</taxon>
        <taxon>Bacillus cereus group</taxon>
    </lineage>
</organism>
<protein>
    <recommendedName>
        <fullName evidence="1">Large ribosomal subunit protein bL19</fullName>
    </recommendedName>
    <alternativeName>
        <fullName evidence="2">50S ribosomal protein L19</fullName>
    </alternativeName>
</protein>
<name>RL19_BACCN</name>
<keyword id="KW-0687">Ribonucleoprotein</keyword>
<keyword id="KW-0689">Ribosomal protein</keyword>
<evidence type="ECO:0000255" key="1">
    <source>
        <dbReference type="HAMAP-Rule" id="MF_00402"/>
    </source>
</evidence>
<evidence type="ECO:0000305" key="2"/>
<sequence>MQQLIAEITKSQLKTDLPSFRPGDTLRVHVKVVEGTRERIQIFEGVVIKRRGGGISETFTVRKVSYGVGVERTFPIHTPRIAKIEVLRRGKVRRAKLYYLRNLRGKAARIKEIR</sequence>
<gene>
    <name evidence="1" type="primary">rplS</name>
    <name type="ordered locus">Bcer98_2492</name>
</gene>
<reference key="1">
    <citation type="journal article" date="2008" name="Chem. Biol. Interact.">
        <title>Extending the Bacillus cereus group genomics to putative food-borne pathogens of different toxicity.</title>
        <authorList>
            <person name="Lapidus A."/>
            <person name="Goltsman E."/>
            <person name="Auger S."/>
            <person name="Galleron N."/>
            <person name="Segurens B."/>
            <person name="Dossat C."/>
            <person name="Land M.L."/>
            <person name="Broussolle V."/>
            <person name="Brillard J."/>
            <person name="Guinebretiere M.-H."/>
            <person name="Sanchis V."/>
            <person name="Nguen-the C."/>
            <person name="Lereclus D."/>
            <person name="Richardson P."/>
            <person name="Wincker P."/>
            <person name="Weissenbach J."/>
            <person name="Ehrlich S.D."/>
            <person name="Sorokin A."/>
        </authorList>
    </citation>
    <scope>NUCLEOTIDE SEQUENCE [LARGE SCALE GENOMIC DNA]</scope>
    <source>
        <strain>DSM 22905 / CIP 110041 / 391-98 / NVH 391-98</strain>
    </source>
</reference>